<gene>
    <name evidence="1" type="primary">lgt</name>
    <name type="ordered locus">LMHCC_0118</name>
</gene>
<feature type="chain" id="PRO_1000164141" description="Phosphatidylglycerol--prolipoprotein diacylglyceryl transferase">
    <location>
        <begin position="1"/>
        <end position="277"/>
    </location>
</feature>
<feature type="transmembrane region" description="Helical" evidence="1">
    <location>
        <begin position="18"/>
        <end position="38"/>
    </location>
</feature>
<feature type="transmembrane region" description="Helical" evidence="1">
    <location>
        <begin position="51"/>
        <end position="71"/>
    </location>
</feature>
<feature type="transmembrane region" description="Helical" evidence="1">
    <location>
        <begin position="89"/>
        <end position="109"/>
    </location>
</feature>
<feature type="transmembrane region" description="Helical" evidence="1">
    <location>
        <begin position="116"/>
        <end position="136"/>
    </location>
</feature>
<feature type="transmembrane region" description="Helical" evidence="1">
    <location>
        <begin position="177"/>
        <end position="197"/>
    </location>
</feature>
<feature type="transmembrane region" description="Helical" evidence="1">
    <location>
        <begin position="205"/>
        <end position="225"/>
    </location>
</feature>
<feature type="transmembrane region" description="Helical" evidence="1">
    <location>
        <begin position="235"/>
        <end position="255"/>
    </location>
</feature>
<feature type="binding site" evidence="1">
    <location>
        <position position="137"/>
    </location>
    <ligand>
        <name>a 1,2-diacyl-sn-glycero-3-phospho-(1'-sn-glycerol)</name>
        <dbReference type="ChEBI" id="CHEBI:64716"/>
    </ligand>
</feature>
<organism>
    <name type="scientific">Listeria monocytogenes serotype 4a (strain HCC23)</name>
    <dbReference type="NCBI Taxonomy" id="552536"/>
    <lineage>
        <taxon>Bacteria</taxon>
        <taxon>Bacillati</taxon>
        <taxon>Bacillota</taxon>
        <taxon>Bacilli</taxon>
        <taxon>Bacillales</taxon>
        <taxon>Listeriaceae</taxon>
        <taxon>Listeria</taxon>
    </lineage>
</organism>
<keyword id="KW-1003">Cell membrane</keyword>
<keyword id="KW-0472">Membrane</keyword>
<keyword id="KW-0808">Transferase</keyword>
<keyword id="KW-0812">Transmembrane</keyword>
<keyword id="KW-1133">Transmembrane helix</keyword>
<comment type="function">
    <text evidence="1">Catalyzes the transfer of the diacylglyceryl group from phosphatidylglycerol to the sulfhydryl group of the N-terminal cysteine of a prolipoprotein, the first step in the formation of mature lipoproteins.</text>
</comment>
<comment type="catalytic activity">
    <reaction evidence="1">
        <text>L-cysteinyl-[prolipoprotein] + a 1,2-diacyl-sn-glycero-3-phospho-(1'-sn-glycerol) = an S-1,2-diacyl-sn-glyceryl-L-cysteinyl-[prolipoprotein] + sn-glycerol 1-phosphate + H(+)</text>
        <dbReference type="Rhea" id="RHEA:56712"/>
        <dbReference type="Rhea" id="RHEA-COMP:14679"/>
        <dbReference type="Rhea" id="RHEA-COMP:14680"/>
        <dbReference type="ChEBI" id="CHEBI:15378"/>
        <dbReference type="ChEBI" id="CHEBI:29950"/>
        <dbReference type="ChEBI" id="CHEBI:57685"/>
        <dbReference type="ChEBI" id="CHEBI:64716"/>
        <dbReference type="ChEBI" id="CHEBI:140658"/>
        <dbReference type="EC" id="2.5.1.145"/>
    </reaction>
</comment>
<comment type="pathway">
    <text evidence="1">Protein modification; lipoprotein biosynthesis (diacylglyceryl transfer).</text>
</comment>
<comment type="subcellular location">
    <subcellularLocation>
        <location evidence="1">Cell membrane</location>
        <topology evidence="1">Multi-pass membrane protein</topology>
    </subcellularLocation>
</comment>
<comment type="similarity">
    <text evidence="1">Belongs to the Lgt family.</text>
</comment>
<sequence>MGNGVQPLDPVAIQIGSISVKWYGVIIASAVVIALLLALSEANKRKMDKEIIVDLLIWAIPISIISARIYYVIFEWDFYKNNLGEIVKIWHGGIAIYGALIGAVLTAIIFSRIKKISFWQLADVVAPSLIIAQAIGRWGNFMNQEAHGAETTRAFLEGLHLPDFIINQMYIDGAYYQPTFLYESLWNVLGFIILLIIRRTKIRRGELFLGYVIWYSFGRFFIEGMRTDSLMWGDFRVSQVLSLLLIVLSIGIIIYRRVKMNPPYYMEDKFGKVVKKK</sequence>
<name>LGT_LISMH</name>
<evidence type="ECO:0000255" key="1">
    <source>
        <dbReference type="HAMAP-Rule" id="MF_01147"/>
    </source>
</evidence>
<accession>B8DBM9</accession>
<reference key="1">
    <citation type="journal article" date="2011" name="J. Bacteriol.">
        <title>Genome sequence of lineage III Listeria monocytogenes strain HCC23.</title>
        <authorList>
            <person name="Steele C.L."/>
            <person name="Donaldson J.R."/>
            <person name="Paul D."/>
            <person name="Banes M.M."/>
            <person name="Arick T."/>
            <person name="Bridges S.M."/>
            <person name="Lawrence M.L."/>
        </authorList>
    </citation>
    <scope>NUCLEOTIDE SEQUENCE [LARGE SCALE GENOMIC DNA]</scope>
    <source>
        <strain>HCC23</strain>
    </source>
</reference>
<protein>
    <recommendedName>
        <fullName evidence="1">Phosphatidylglycerol--prolipoprotein diacylglyceryl transferase</fullName>
        <ecNumber evidence="1">2.5.1.145</ecNumber>
    </recommendedName>
</protein>
<dbReference type="EC" id="2.5.1.145" evidence="1"/>
<dbReference type="EMBL" id="CP001175">
    <property type="protein sequence ID" value="ACK38480.1"/>
    <property type="molecule type" value="Genomic_DNA"/>
</dbReference>
<dbReference type="RefSeq" id="WP_012580766.1">
    <property type="nucleotide sequence ID" value="NC_011660.1"/>
</dbReference>
<dbReference type="SMR" id="B8DBM9"/>
<dbReference type="KEGG" id="lmh:LMHCC_0118"/>
<dbReference type="HOGENOM" id="CLU_013386_1_2_9"/>
<dbReference type="UniPathway" id="UPA00664"/>
<dbReference type="GO" id="GO:0005886">
    <property type="term" value="C:plasma membrane"/>
    <property type="evidence" value="ECO:0007669"/>
    <property type="project" value="UniProtKB-SubCell"/>
</dbReference>
<dbReference type="GO" id="GO:0008961">
    <property type="term" value="F:phosphatidylglycerol-prolipoprotein diacylglyceryl transferase activity"/>
    <property type="evidence" value="ECO:0007669"/>
    <property type="project" value="UniProtKB-UniRule"/>
</dbReference>
<dbReference type="GO" id="GO:0042158">
    <property type="term" value="P:lipoprotein biosynthetic process"/>
    <property type="evidence" value="ECO:0007669"/>
    <property type="project" value="UniProtKB-UniRule"/>
</dbReference>
<dbReference type="HAMAP" id="MF_01147">
    <property type="entry name" value="Lgt"/>
    <property type="match status" value="1"/>
</dbReference>
<dbReference type="InterPro" id="IPR001640">
    <property type="entry name" value="Lgt"/>
</dbReference>
<dbReference type="NCBIfam" id="TIGR00544">
    <property type="entry name" value="lgt"/>
    <property type="match status" value="1"/>
</dbReference>
<dbReference type="PANTHER" id="PTHR30589:SF0">
    <property type="entry name" value="PHOSPHATIDYLGLYCEROL--PROLIPOPROTEIN DIACYLGLYCERYL TRANSFERASE"/>
    <property type="match status" value="1"/>
</dbReference>
<dbReference type="PANTHER" id="PTHR30589">
    <property type="entry name" value="PROLIPOPROTEIN DIACYLGLYCERYL TRANSFERASE"/>
    <property type="match status" value="1"/>
</dbReference>
<dbReference type="Pfam" id="PF01790">
    <property type="entry name" value="LGT"/>
    <property type="match status" value="1"/>
</dbReference>
<dbReference type="PROSITE" id="PS01311">
    <property type="entry name" value="LGT"/>
    <property type="match status" value="1"/>
</dbReference>
<proteinExistence type="inferred from homology"/>